<proteinExistence type="evidence at transcript level"/>
<sequence length="400" mass="41368">MKLEVFVPRAAHGDKMGSDLEGAGSSDVPSPLSAAGDDSLGSDGDCAANSPAAGSGAGDLEGGGGERNSSGGPSAQDGPEATDDSRTQASAAGPCAGGVGGGEGARSKPYTRRPKPPYSYIALIAMAIRDSAGGRLTLAEINEYLMGKFPFFRGSYTGWRNSVRHNLSLNDCFVKVLRDPSRPWGKDNYWMLNPNSEYTFADGVFRRRRKRLSHRTTVSASGLRPEEAPPGPAGTPQPAPAARSSPIARSPARQEERSSPASKFSSSFAIDSILSKPFRSRRDGDSALGVQLPWGAAPCPPLRAYPALLPAAPGGALLPLCAYGASEPTLLASRGTEVQPAAPLLLAPLSTAAPAKPFRGPETAGAAHLYCPLRLPTALQAAAACGPGPHLSYPVETLLA</sequence>
<keyword id="KW-0238">DNA-binding</keyword>
<keyword id="KW-0539">Nucleus</keyword>
<keyword id="KW-1185">Reference proteome</keyword>
<keyword id="KW-0804">Transcription</keyword>
<keyword id="KW-0805">Transcription regulation</keyword>
<dbReference type="EMBL" id="AF010405">
    <property type="protein sequence ID" value="AAC12973.2"/>
    <property type="molecule type" value="Genomic_DNA"/>
</dbReference>
<dbReference type="EMBL" id="AF154426">
    <property type="protein sequence ID" value="AAF74524.1"/>
    <property type="molecule type" value="Genomic_DNA"/>
</dbReference>
<dbReference type="EMBL" id="AK147202">
    <property type="protein sequence ID" value="BAE27760.1"/>
    <property type="molecule type" value="mRNA"/>
</dbReference>
<dbReference type="EMBL" id="AL589738">
    <property type="status" value="NOT_ANNOTATED_CDS"/>
    <property type="molecule type" value="Genomic_DNA"/>
</dbReference>
<dbReference type="EMBL" id="CH466561">
    <property type="protein sequence ID" value="EDL32371.1"/>
    <property type="molecule type" value="Genomic_DNA"/>
</dbReference>
<dbReference type="EMBL" id="BC047155">
    <property type="protein sequence ID" value="AAH47155.1"/>
    <property type="molecule type" value="mRNA"/>
</dbReference>
<dbReference type="CCDS" id="CCDS26423.1"/>
<dbReference type="RefSeq" id="NP_032265.3">
    <property type="nucleotide sequence ID" value="NM_008239.4"/>
</dbReference>
<dbReference type="SMR" id="O70220"/>
<dbReference type="BioGRID" id="200287">
    <property type="interactions" value="2"/>
</dbReference>
<dbReference type="FunCoup" id="O70220">
    <property type="interactions" value="5"/>
</dbReference>
<dbReference type="IntAct" id="O70220">
    <property type="interactions" value="2"/>
</dbReference>
<dbReference type="STRING" id="10090.ENSMUSP00000036952"/>
<dbReference type="iPTMnet" id="O70220"/>
<dbReference type="PhosphoSitePlus" id="O70220"/>
<dbReference type="PaxDb" id="10090-ENSMUSP00000036952"/>
<dbReference type="ProteomicsDB" id="267512"/>
<dbReference type="Antibodypedia" id="9198">
    <property type="antibodies" value="479 antibodies from 30 providers"/>
</dbReference>
<dbReference type="DNASU" id="15220"/>
<dbReference type="Ensembl" id="ENSMUST00000042118.11">
    <property type="protein sequence ID" value="ENSMUSP00000036952.9"/>
    <property type="gene ID" value="ENSMUSG00000038415.11"/>
</dbReference>
<dbReference type="GeneID" id="15220"/>
<dbReference type="KEGG" id="mmu:15220"/>
<dbReference type="UCSC" id="uc007pzj.2">
    <property type="organism name" value="mouse"/>
</dbReference>
<dbReference type="AGR" id="MGI:1298228"/>
<dbReference type="CTD" id="94234"/>
<dbReference type="MGI" id="MGI:1298228">
    <property type="gene designation" value="Foxq1"/>
</dbReference>
<dbReference type="VEuPathDB" id="HostDB:ENSMUSG00000038415"/>
<dbReference type="eggNOG" id="KOG2294">
    <property type="taxonomic scope" value="Eukaryota"/>
</dbReference>
<dbReference type="GeneTree" id="ENSGT00940000162937"/>
<dbReference type="HOGENOM" id="CLU_055457_0_0_1"/>
<dbReference type="InParanoid" id="O70220"/>
<dbReference type="OMA" id="YLMGRFP"/>
<dbReference type="OrthoDB" id="5954824at2759"/>
<dbReference type="TreeFam" id="TF316127"/>
<dbReference type="BioGRID-ORCS" id="15220">
    <property type="hits" value="2 hits in 80 CRISPR screens"/>
</dbReference>
<dbReference type="PRO" id="PR:O70220"/>
<dbReference type="Proteomes" id="UP000000589">
    <property type="component" value="Chromosome 13"/>
</dbReference>
<dbReference type="RNAct" id="O70220">
    <property type="molecule type" value="protein"/>
</dbReference>
<dbReference type="Bgee" id="ENSMUSG00000038415">
    <property type="expression patterns" value="Expressed in urinary bladder urothelium and 136 other cell types or tissues"/>
</dbReference>
<dbReference type="GO" id="GO:0005634">
    <property type="term" value="C:nucleus"/>
    <property type="evidence" value="ECO:0007669"/>
    <property type="project" value="UniProtKB-SubCell"/>
</dbReference>
<dbReference type="GO" id="GO:0001227">
    <property type="term" value="F:DNA-binding transcription repressor activity, RNA polymerase II-specific"/>
    <property type="evidence" value="ECO:0000314"/>
    <property type="project" value="NTNU_SB"/>
</dbReference>
<dbReference type="GO" id="GO:0000978">
    <property type="term" value="F:RNA polymerase II cis-regulatory region sequence-specific DNA binding"/>
    <property type="evidence" value="ECO:0000314"/>
    <property type="project" value="NTNU_SB"/>
</dbReference>
<dbReference type="GO" id="GO:0031069">
    <property type="term" value="P:hair follicle morphogenesis"/>
    <property type="evidence" value="ECO:0000315"/>
    <property type="project" value="MGI"/>
</dbReference>
<dbReference type="GO" id="GO:0000122">
    <property type="term" value="P:negative regulation of transcription by RNA polymerase II"/>
    <property type="evidence" value="ECO:0000314"/>
    <property type="project" value="NTNU_SB"/>
</dbReference>
<dbReference type="CDD" id="cd20034">
    <property type="entry name" value="FH_FOXQ1-like"/>
    <property type="match status" value="1"/>
</dbReference>
<dbReference type="FunFam" id="1.10.10.10:FF:000071">
    <property type="entry name" value="Forkhead box F1"/>
    <property type="match status" value="1"/>
</dbReference>
<dbReference type="Gene3D" id="1.10.10.10">
    <property type="entry name" value="Winged helix-like DNA-binding domain superfamily/Winged helix DNA-binding domain"/>
    <property type="match status" value="1"/>
</dbReference>
<dbReference type="InterPro" id="IPR047518">
    <property type="entry name" value="FH_FOXQ1"/>
</dbReference>
<dbReference type="InterPro" id="IPR001766">
    <property type="entry name" value="Fork_head_dom"/>
</dbReference>
<dbReference type="InterPro" id="IPR050211">
    <property type="entry name" value="FOX_domain-containing"/>
</dbReference>
<dbReference type="InterPro" id="IPR018122">
    <property type="entry name" value="TF_fork_head_CS_1"/>
</dbReference>
<dbReference type="InterPro" id="IPR030456">
    <property type="entry name" value="TF_fork_head_CS_2"/>
</dbReference>
<dbReference type="InterPro" id="IPR036388">
    <property type="entry name" value="WH-like_DNA-bd_sf"/>
</dbReference>
<dbReference type="InterPro" id="IPR036390">
    <property type="entry name" value="WH_DNA-bd_sf"/>
</dbReference>
<dbReference type="PANTHER" id="PTHR11829">
    <property type="entry name" value="FORKHEAD BOX PROTEIN"/>
    <property type="match status" value="1"/>
</dbReference>
<dbReference type="PANTHER" id="PTHR11829:SF206">
    <property type="entry name" value="FORKHEAD BOX PROTEIN Q1"/>
    <property type="match status" value="1"/>
</dbReference>
<dbReference type="Pfam" id="PF00250">
    <property type="entry name" value="Forkhead"/>
    <property type="match status" value="1"/>
</dbReference>
<dbReference type="PRINTS" id="PR00053">
    <property type="entry name" value="FORKHEAD"/>
</dbReference>
<dbReference type="SMART" id="SM00339">
    <property type="entry name" value="FH"/>
    <property type="match status" value="1"/>
</dbReference>
<dbReference type="SUPFAM" id="SSF46785">
    <property type="entry name" value="Winged helix' DNA-binding domain"/>
    <property type="match status" value="1"/>
</dbReference>
<dbReference type="PROSITE" id="PS00657">
    <property type="entry name" value="FORK_HEAD_1"/>
    <property type="match status" value="1"/>
</dbReference>
<dbReference type="PROSITE" id="PS00658">
    <property type="entry name" value="FORK_HEAD_2"/>
    <property type="match status" value="1"/>
</dbReference>
<dbReference type="PROSITE" id="PS50039">
    <property type="entry name" value="FORK_HEAD_3"/>
    <property type="match status" value="1"/>
</dbReference>
<accession>O70220</accession>
<accession>Q9JJ18</accession>
<organism>
    <name type="scientific">Mus musculus</name>
    <name type="common">Mouse</name>
    <dbReference type="NCBI Taxonomy" id="10090"/>
    <lineage>
        <taxon>Eukaryota</taxon>
        <taxon>Metazoa</taxon>
        <taxon>Chordata</taxon>
        <taxon>Craniata</taxon>
        <taxon>Vertebrata</taxon>
        <taxon>Euteleostomi</taxon>
        <taxon>Mammalia</taxon>
        <taxon>Eutheria</taxon>
        <taxon>Euarchontoglires</taxon>
        <taxon>Glires</taxon>
        <taxon>Rodentia</taxon>
        <taxon>Myomorpha</taxon>
        <taxon>Muroidea</taxon>
        <taxon>Muridae</taxon>
        <taxon>Murinae</taxon>
        <taxon>Mus</taxon>
        <taxon>Mus</taxon>
    </lineage>
</organism>
<gene>
    <name type="primary">Foxq1</name>
    <name type="synonym">Hfh1</name>
    <name type="synonym">Hfh1l</name>
</gene>
<name>FOXQ1_MOUSE</name>
<protein>
    <recommendedName>
        <fullName>Forkhead box protein Q1</fullName>
    </recommendedName>
    <alternativeName>
        <fullName>HFH-1l</fullName>
    </alternativeName>
    <alternativeName>
        <fullName>HNF-3/forkhead-like protein 1</fullName>
        <shortName>HFH-1</shortName>
    </alternativeName>
    <alternativeName>
        <fullName>Hepatocyte nuclear factor 3 forkhead homolog 1</fullName>
    </alternativeName>
</protein>
<evidence type="ECO:0000255" key="1">
    <source>
        <dbReference type="PROSITE-ProRule" id="PRU00089"/>
    </source>
</evidence>
<evidence type="ECO:0000256" key="2">
    <source>
        <dbReference type="SAM" id="MobiDB-lite"/>
    </source>
</evidence>
<evidence type="ECO:0000269" key="3">
    <source>
    </source>
</evidence>
<evidence type="ECO:0000269" key="4">
    <source>
    </source>
</evidence>
<evidence type="ECO:0000269" key="5">
    <source>
    </source>
</evidence>
<evidence type="ECO:0000305" key="6"/>
<comment type="function">
    <text evidence="4">Plays a role in hair follicle differentiation.</text>
</comment>
<comment type="subcellular location">
    <subcellularLocation>
        <location evidence="1">Nucleus</location>
    </subcellularLocation>
</comment>
<comment type="tissue specificity">
    <text evidence="4 5">Expressed in kidney and stomach. Expression in the outer medulla of the kidney and the transitional epithelium. Expressed in the hair follicle medulla.</text>
</comment>
<comment type="disease">
    <text evidence="3">Defects in Foxq1 are the cause of the satin (sa) phenotype and results in a silky coat with high sheen arising from structurally abnormal medulla cells and defects in differentiation of the hair shaft.</text>
</comment>
<reference key="1">
    <citation type="journal article" date="1998" name="DNA Cell Biol.">
        <title>Mouse HNF-3/fork head homolog-1-like gene: structure, chromosomal location, and expression in adult and embryonic kidney.</title>
        <authorList>
            <person name="Frank S."/>
            <person name="Zoll B."/>
        </authorList>
    </citation>
    <scope>NUCLEOTIDE SEQUENCE [GENOMIC DNA]</scope>
    <scope>TISSUE SPECIFICITY</scope>
    <source>
        <strain>129</strain>
        <tissue>Kidney</tissue>
    </source>
</reference>
<reference key="2">
    <citation type="submission" date="2000-01" db="EMBL/GenBank/DDBJ databases">
        <authorList>
            <person name="Pasche B."/>
            <person name="Bieller A."/>
            <person name="Zoll B."/>
        </authorList>
    </citation>
    <scope>SEQUENCE REVISION</scope>
</reference>
<reference key="3">
    <citation type="journal article" date="2001" name="Genesis">
        <title>The winged helix/forkhead transcription factor Foxq1 regulates differentiation of hair in satin mice.</title>
        <authorList>
            <person name="Hong H.-K."/>
            <person name="Noveroske J.K."/>
            <person name="Headon D.J."/>
            <person name="Liu T."/>
            <person name="Sy M.S."/>
            <person name="Justice M.J."/>
            <person name="Chakravarti A."/>
        </authorList>
    </citation>
    <scope>NUCLEOTIDE SEQUENCE [GENOMIC DNA]</scope>
    <scope>DISEASE</scope>
    <source>
        <strain>129</strain>
    </source>
</reference>
<reference key="4">
    <citation type="journal article" date="2005" name="Science">
        <title>The transcriptional landscape of the mammalian genome.</title>
        <authorList>
            <person name="Carninci P."/>
            <person name="Kasukawa T."/>
            <person name="Katayama S."/>
            <person name="Gough J."/>
            <person name="Frith M.C."/>
            <person name="Maeda N."/>
            <person name="Oyama R."/>
            <person name="Ravasi T."/>
            <person name="Lenhard B."/>
            <person name="Wells C."/>
            <person name="Kodzius R."/>
            <person name="Shimokawa K."/>
            <person name="Bajic V.B."/>
            <person name="Brenner S.E."/>
            <person name="Batalov S."/>
            <person name="Forrest A.R."/>
            <person name="Zavolan M."/>
            <person name="Davis M.J."/>
            <person name="Wilming L.G."/>
            <person name="Aidinis V."/>
            <person name="Allen J.E."/>
            <person name="Ambesi-Impiombato A."/>
            <person name="Apweiler R."/>
            <person name="Aturaliya R.N."/>
            <person name="Bailey T.L."/>
            <person name="Bansal M."/>
            <person name="Baxter L."/>
            <person name="Beisel K.W."/>
            <person name="Bersano T."/>
            <person name="Bono H."/>
            <person name="Chalk A.M."/>
            <person name="Chiu K.P."/>
            <person name="Choudhary V."/>
            <person name="Christoffels A."/>
            <person name="Clutterbuck D.R."/>
            <person name="Crowe M.L."/>
            <person name="Dalla E."/>
            <person name="Dalrymple B.P."/>
            <person name="de Bono B."/>
            <person name="Della Gatta G."/>
            <person name="di Bernardo D."/>
            <person name="Down T."/>
            <person name="Engstrom P."/>
            <person name="Fagiolini M."/>
            <person name="Faulkner G."/>
            <person name="Fletcher C.F."/>
            <person name="Fukushima T."/>
            <person name="Furuno M."/>
            <person name="Futaki S."/>
            <person name="Gariboldi M."/>
            <person name="Georgii-Hemming P."/>
            <person name="Gingeras T.R."/>
            <person name="Gojobori T."/>
            <person name="Green R.E."/>
            <person name="Gustincich S."/>
            <person name="Harbers M."/>
            <person name="Hayashi Y."/>
            <person name="Hensch T.K."/>
            <person name="Hirokawa N."/>
            <person name="Hill D."/>
            <person name="Huminiecki L."/>
            <person name="Iacono M."/>
            <person name="Ikeo K."/>
            <person name="Iwama A."/>
            <person name="Ishikawa T."/>
            <person name="Jakt M."/>
            <person name="Kanapin A."/>
            <person name="Katoh M."/>
            <person name="Kawasawa Y."/>
            <person name="Kelso J."/>
            <person name="Kitamura H."/>
            <person name="Kitano H."/>
            <person name="Kollias G."/>
            <person name="Krishnan S.P."/>
            <person name="Kruger A."/>
            <person name="Kummerfeld S.K."/>
            <person name="Kurochkin I.V."/>
            <person name="Lareau L.F."/>
            <person name="Lazarevic D."/>
            <person name="Lipovich L."/>
            <person name="Liu J."/>
            <person name="Liuni S."/>
            <person name="McWilliam S."/>
            <person name="Madan Babu M."/>
            <person name="Madera M."/>
            <person name="Marchionni L."/>
            <person name="Matsuda H."/>
            <person name="Matsuzawa S."/>
            <person name="Miki H."/>
            <person name="Mignone F."/>
            <person name="Miyake S."/>
            <person name="Morris K."/>
            <person name="Mottagui-Tabar S."/>
            <person name="Mulder N."/>
            <person name="Nakano N."/>
            <person name="Nakauchi H."/>
            <person name="Ng P."/>
            <person name="Nilsson R."/>
            <person name="Nishiguchi S."/>
            <person name="Nishikawa S."/>
            <person name="Nori F."/>
            <person name="Ohara O."/>
            <person name="Okazaki Y."/>
            <person name="Orlando V."/>
            <person name="Pang K.C."/>
            <person name="Pavan W.J."/>
            <person name="Pavesi G."/>
            <person name="Pesole G."/>
            <person name="Petrovsky N."/>
            <person name="Piazza S."/>
            <person name="Reed J."/>
            <person name="Reid J.F."/>
            <person name="Ring B.Z."/>
            <person name="Ringwald M."/>
            <person name="Rost B."/>
            <person name="Ruan Y."/>
            <person name="Salzberg S.L."/>
            <person name="Sandelin A."/>
            <person name="Schneider C."/>
            <person name="Schoenbach C."/>
            <person name="Sekiguchi K."/>
            <person name="Semple C.A."/>
            <person name="Seno S."/>
            <person name="Sessa L."/>
            <person name="Sheng Y."/>
            <person name="Shibata Y."/>
            <person name="Shimada H."/>
            <person name="Shimada K."/>
            <person name="Silva D."/>
            <person name="Sinclair B."/>
            <person name="Sperling S."/>
            <person name="Stupka E."/>
            <person name="Sugiura K."/>
            <person name="Sultana R."/>
            <person name="Takenaka Y."/>
            <person name="Taki K."/>
            <person name="Tammoja K."/>
            <person name="Tan S.L."/>
            <person name="Tang S."/>
            <person name="Taylor M.S."/>
            <person name="Tegner J."/>
            <person name="Teichmann S.A."/>
            <person name="Ueda H.R."/>
            <person name="van Nimwegen E."/>
            <person name="Verardo R."/>
            <person name="Wei C.L."/>
            <person name="Yagi K."/>
            <person name="Yamanishi H."/>
            <person name="Zabarovsky E."/>
            <person name="Zhu S."/>
            <person name="Zimmer A."/>
            <person name="Hide W."/>
            <person name="Bult C."/>
            <person name="Grimmond S.M."/>
            <person name="Teasdale R.D."/>
            <person name="Liu E.T."/>
            <person name="Brusic V."/>
            <person name="Quackenbush J."/>
            <person name="Wahlestedt C."/>
            <person name="Mattick J.S."/>
            <person name="Hume D.A."/>
            <person name="Kai C."/>
            <person name="Sasaki D."/>
            <person name="Tomaru Y."/>
            <person name="Fukuda S."/>
            <person name="Kanamori-Katayama M."/>
            <person name="Suzuki M."/>
            <person name="Aoki J."/>
            <person name="Arakawa T."/>
            <person name="Iida J."/>
            <person name="Imamura K."/>
            <person name="Itoh M."/>
            <person name="Kato T."/>
            <person name="Kawaji H."/>
            <person name="Kawagashira N."/>
            <person name="Kawashima T."/>
            <person name="Kojima M."/>
            <person name="Kondo S."/>
            <person name="Konno H."/>
            <person name="Nakano K."/>
            <person name="Ninomiya N."/>
            <person name="Nishio T."/>
            <person name="Okada M."/>
            <person name="Plessy C."/>
            <person name="Shibata K."/>
            <person name="Shiraki T."/>
            <person name="Suzuki S."/>
            <person name="Tagami M."/>
            <person name="Waki K."/>
            <person name="Watahiki A."/>
            <person name="Okamura-Oho Y."/>
            <person name="Suzuki H."/>
            <person name="Kawai J."/>
            <person name="Hayashizaki Y."/>
        </authorList>
    </citation>
    <scope>NUCLEOTIDE SEQUENCE [LARGE SCALE MRNA]</scope>
    <source>
        <strain>C57BL/6J</strain>
        <tissue>Embryo</tissue>
    </source>
</reference>
<reference key="5">
    <citation type="journal article" date="2009" name="PLoS Biol.">
        <title>Lineage-specific biology revealed by a finished genome assembly of the mouse.</title>
        <authorList>
            <person name="Church D.M."/>
            <person name="Goodstadt L."/>
            <person name="Hillier L.W."/>
            <person name="Zody M.C."/>
            <person name="Goldstein S."/>
            <person name="She X."/>
            <person name="Bult C.J."/>
            <person name="Agarwala R."/>
            <person name="Cherry J.L."/>
            <person name="DiCuccio M."/>
            <person name="Hlavina W."/>
            <person name="Kapustin Y."/>
            <person name="Meric P."/>
            <person name="Maglott D."/>
            <person name="Birtle Z."/>
            <person name="Marques A.C."/>
            <person name="Graves T."/>
            <person name="Zhou S."/>
            <person name="Teague B."/>
            <person name="Potamousis K."/>
            <person name="Churas C."/>
            <person name="Place M."/>
            <person name="Herschleb J."/>
            <person name="Runnheim R."/>
            <person name="Forrest D."/>
            <person name="Amos-Landgraf J."/>
            <person name="Schwartz D.C."/>
            <person name="Cheng Z."/>
            <person name="Lindblad-Toh K."/>
            <person name="Eichler E.E."/>
            <person name="Ponting C.P."/>
        </authorList>
    </citation>
    <scope>NUCLEOTIDE SEQUENCE [LARGE SCALE GENOMIC DNA]</scope>
    <source>
        <strain>C57BL/6J</strain>
    </source>
</reference>
<reference key="6">
    <citation type="submission" date="2005-07" db="EMBL/GenBank/DDBJ databases">
        <authorList>
            <person name="Mural R.J."/>
            <person name="Adams M.D."/>
            <person name="Myers E.W."/>
            <person name="Smith H.O."/>
            <person name="Venter J.C."/>
        </authorList>
    </citation>
    <scope>NUCLEOTIDE SEQUENCE [LARGE SCALE GENOMIC DNA]</scope>
</reference>
<reference key="7">
    <citation type="journal article" date="2004" name="Genome Res.">
        <title>The status, quality, and expansion of the NIH full-length cDNA project: the Mammalian Gene Collection (MGC).</title>
        <authorList>
            <consortium name="The MGC Project Team"/>
        </authorList>
    </citation>
    <scope>NUCLEOTIDE SEQUENCE [LARGE SCALE MRNA]</scope>
    <source>
        <strain>FVB/N-3</strain>
        <tissue>Mammary tumor</tissue>
    </source>
</reference>
<reference key="8">
    <citation type="journal article" date="2006" name="J. Biol. Chem.">
        <title>Evidence that the satin hair mutant gene Foxq1 is among multiple and functionally diverse regulatory targets for Hoxc13 during hair follicle differentiation.</title>
        <authorList>
            <person name="Potter C.S."/>
            <person name="Peterson R.L."/>
            <person name="Barth J.L."/>
            <person name="Pruett N.D."/>
            <person name="Jacobs D.F."/>
            <person name="Kern M.J."/>
            <person name="Argraves W.S."/>
            <person name="Sundberg J.P."/>
            <person name="Awgulewitsch A."/>
        </authorList>
    </citation>
    <scope>FUNCTION</scope>
    <scope>TISSUE SPECIFICITY</scope>
</reference>
<feature type="chain" id="PRO_0000091891" description="Forkhead box protein Q1">
    <location>
        <begin position="1"/>
        <end position="400"/>
    </location>
</feature>
<feature type="DNA-binding region" description="Fork-head" evidence="1">
    <location>
        <begin position="115"/>
        <end position="210"/>
    </location>
</feature>
<feature type="region of interest" description="Disordered" evidence="2">
    <location>
        <begin position="1"/>
        <end position="112"/>
    </location>
</feature>
<feature type="region of interest" description="Disordered" evidence="2">
    <location>
        <begin position="213"/>
        <end position="264"/>
    </location>
</feature>
<feature type="compositionally biased region" description="Low complexity" evidence="2">
    <location>
        <begin position="32"/>
        <end position="54"/>
    </location>
</feature>
<feature type="compositionally biased region" description="Gly residues" evidence="2">
    <location>
        <begin position="55"/>
        <end position="66"/>
    </location>
</feature>
<feature type="compositionally biased region" description="Gly residues" evidence="2">
    <location>
        <begin position="95"/>
        <end position="104"/>
    </location>
</feature>
<feature type="compositionally biased region" description="Pro residues" evidence="2">
    <location>
        <begin position="228"/>
        <end position="239"/>
    </location>
</feature>
<feature type="compositionally biased region" description="Low complexity" evidence="2">
    <location>
        <begin position="240"/>
        <end position="251"/>
    </location>
</feature>
<feature type="sequence conflict" description="In Ref. 1; AAC12973." evidence="6" ref="1">
    <original>P</original>
    <variation>A</variation>
    <location>
        <position position="238"/>
    </location>
</feature>